<evidence type="ECO:0000255" key="1">
    <source>
        <dbReference type="HAMAP-Rule" id="MF_00648"/>
    </source>
</evidence>
<feature type="chain" id="PRO_1000056962" description="Inosine/xanthosine triphosphatase">
    <location>
        <begin position="1"/>
        <end position="180"/>
    </location>
</feature>
<feature type="binding site" evidence="1">
    <location>
        <begin position="8"/>
        <end position="13"/>
    </location>
    <ligand>
        <name>substrate</name>
    </ligand>
</feature>
<feature type="binding site" evidence="1">
    <location>
        <position position="38"/>
    </location>
    <ligand>
        <name>Mg(2+)</name>
        <dbReference type="ChEBI" id="CHEBI:18420"/>
    </ligand>
</feature>
<feature type="binding site" evidence="1">
    <location>
        <begin position="68"/>
        <end position="69"/>
    </location>
    <ligand>
        <name>substrate</name>
    </ligand>
</feature>
<feature type="binding site" evidence="1">
    <location>
        <position position="68"/>
    </location>
    <ligand>
        <name>Mg(2+)</name>
        <dbReference type="ChEBI" id="CHEBI:18420"/>
    </ligand>
</feature>
<comment type="function">
    <text evidence="1">Phosphatase that hydrolyzes non-canonical purine nucleotides such as XTP and ITP to their respective diphosphate derivatives. Probably excludes non-canonical purines from DNA/RNA precursor pool, thus preventing their incorporation into DNA/RNA and avoiding chromosomal lesions.</text>
</comment>
<comment type="catalytic activity">
    <reaction evidence="1">
        <text>XTP + H2O = XDP + phosphate + H(+)</text>
        <dbReference type="Rhea" id="RHEA:28406"/>
        <dbReference type="ChEBI" id="CHEBI:15377"/>
        <dbReference type="ChEBI" id="CHEBI:15378"/>
        <dbReference type="ChEBI" id="CHEBI:43474"/>
        <dbReference type="ChEBI" id="CHEBI:59884"/>
        <dbReference type="ChEBI" id="CHEBI:61314"/>
        <dbReference type="EC" id="3.6.1.73"/>
    </reaction>
</comment>
<comment type="catalytic activity">
    <reaction evidence="1">
        <text>ITP + H2O = IDP + phosphate + H(+)</text>
        <dbReference type="Rhea" id="RHEA:28330"/>
        <dbReference type="ChEBI" id="CHEBI:15377"/>
        <dbReference type="ChEBI" id="CHEBI:15378"/>
        <dbReference type="ChEBI" id="CHEBI:43474"/>
        <dbReference type="ChEBI" id="CHEBI:58280"/>
        <dbReference type="ChEBI" id="CHEBI:61402"/>
        <dbReference type="EC" id="3.6.1.73"/>
    </reaction>
</comment>
<comment type="cofactor">
    <cofactor evidence="1">
        <name>Mg(2+)</name>
        <dbReference type="ChEBI" id="CHEBI:18420"/>
    </cofactor>
    <cofactor evidence="1">
        <name>Mn(2+)</name>
        <dbReference type="ChEBI" id="CHEBI:29035"/>
    </cofactor>
    <text evidence="1">Binds 1 divalent metal cation per subunit; can use either Mg(2+) or Mn(2+).</text>
</comment>
<comment type="subunit">
    <text evidence="1">Homodimer.</text>
</comment>
<comment type="similarity">
    <text evidence="1">Belongs to the YjjX NTPase family.</text>
</comment>
<protein>
    <recommendedName>
        <fullName evidence="1">Inosine/xanthosine triphosphatase</fullName>
        <shortName evidence="1">ITPase/XTPase</shortName>
        <ecNumber evidence="1">3.6.1.73</ecNumber>
    </recommendedName>
    <alternativeName>
        <fullName evidence="1">Non-canonical purine NTP phosphatase</fullName>
    </alternativeName>
    <alternativeName>
        <fullName evidence="1">Non-standard purine NTP phosphatase</fullName>
    </alternativeName>
    <alternativeName>
        <fullName evidence="1">Nucleoside-triphosphate phosphatase</fullName>
        <shortName evidence="1">NTPase</shortName>
    </alternativeName>
</protein>
<organism>
    <name type="scientific">Yersinia pestis bv. Antiqua (strain Antiqua)</name>
    <dbReference type="NCBI Taxonomy" id="360102"/>
    <lineage>
        <taxon>Bacteria</taxon>
        <taxon>Pseudomonadati</taxon>
        <taxon>Pseudomonadota</taxon>
        <taxon>Gammaproteobacteria</taxon>
        <taxon>Enterobacterales</taxon>
        <taxon>Yersiniaceae</taxon>
        <taxon>Yersinia</taxon>
    </lineage>
</organism>
<sequence>MYHVIAATTNPAKINAITLAFDDVYGPGQYRIEGVNVDSGVPLQPIGSTETRIGARQRVKNARQVRPEADFWVGIEAGIEDNMTFAWMVVEHLQARGESRSASLMLPDIILQGIRQGRELGDEMAVLSGISNVKQQGGAIGIFTQGKLTRTSVYHQALLLALVPFHNEIYQRPSPSKPAI</sequence>
<reference key="1">
    <citation type="journal article" date="2006" name="J. Bacteriol.">
        <title>Complete genome sequence of Yersinia pestis strains Antiqua and Nepal516: evidence of gene reduction in an emerging pathogen.</title>
        <authorList>
            <person name="Chain P.S.G."/>
            <person name="Hu P."/>
            <person name="Malfatti S.A."/>
            <person name="Radnedge L."/>
            <person name="Larimer F."/>
            <person name="Vergez L.M."/>
            <person name="Worsham P."/>
            <person name="Chu M.C."/>
            <person name="Andersen G.L."/>
        </authorList>
    </citation>
    <scope>NUCLEOTIDE SEQUENCE [LARGE SCALE GENOMIC DNA]</scope>
    <source>
        <strain>Antiqua</strain>
    </source>
</reference>
<gene>
    <name type="ordered locus">YPA_4045</name>
</gene>
<keyword id="KW-0378">Hydrolase</keyword>
<keyword id="KW-0460">Magnesium</keyword>
<keyword id="KW-0464">Manganese</keyword>
<keyword id="KW-0479">Metal-binding</keyword>
<keyword id="KW-0546">Nucleotide metabolism</keyword>
<keyword id="KW-0547">Nucleotide-binding</keyword>
<accession>Q1C0L6</accession>
<dbReference type="EC" id="3.6.1.73" evidence="1"/>
<dbReference type="EMBL" id="CP000308">
    <property type="protein sequence ID" value="ABG16006.1"/>
    <property type="molecule type" value="Genomic_DNA"/>
</dbReference>
<dbReference type="SMR" id="Q1C0L6"/>
<dbReference type="KEGG" id="ypa:YPA_4045"/>
<dbReference type="Proteomes" id="UP000001971">
    <property type="component" value="Chromosome"/>
</dbReference>
<dbReference type="GO" id="GO:0103023">
    <property type="term" value="F:ITPase activity"/>
    <property type="evidence" value="ECO:0007669"/>
    <property type="project" value="UniProtKB-EC"/>
</dbReference>
<dbReference type="GO" id="GO:0046872">
    <property type="term" value="F:metal ion binding"/>
    <property type="evidence" value="ECO:0007669"/>
    <property type="project" value="UniProtKB-KW"/>
</dbReference>
<dbReference type="GO" id="GO:0000166">
    <property type="term" value="F:nucleotide binding"/>
    <property type="evidence" value="ECO:0007669"/>
    <property type="project" value="UniProtKB-KW"/>
</dbReference>
<dbReference type="GO" id="GO:0017111">
    <property type="term" value="F:ribonucleoside triphosphate phosphatase activity"/>
    <property type="evidence" value="ECO:0000250"/>
    <property type="project" value="UniProtKB"/>
</dbReference>
<dbReference type="GO" id="GO:0009117">
    <property type="term" value="P:nucleotide metabolic process"/>
    <property type="evidence" value="ECO:0007669"/>
    <property type="project" value="UniProtKB-KW"/>
</dbReference>
<dbReference type="GO" id="GO:0006772">
    <property type="term" value="P:thiamine metabolic process"/>
    <property type="evidence" value="ECO:0007669"/>
    <property type="project" value="TreeGrafter"/>
</dbReference>
<dbReference type="FunFam" id="3.90.950.10:FF:000002">
    <property type="entry name" value="Inosine/xanthosine triphosphatase"/>
    <property type="match status" value="1"/>
</dbReference>
<dbReference type="Gene3D" id="3.90.950.10">
    <property type="match status" value="1"/>
</dbReference>
<dbReference type="HAMAP" id="MF_00648">
    <property type="entry name" value="Non_canon_purine_NTPase_YjjX"/>
    <property type="match status" value="1"/>
</dbReference>
<dbReference type="InterPro" id="IPR029001">
    <property type="entry name" value="ITPase-like_fam"/>
</dbReference>
<dbReference type="InterPro" id="IPR002786">
    <property type="entry name" value="Non_canon_purine_NTPase"/>
</dbReference>
<dbReference type="InterPro" id="IPR026533">
    <property type="entry name" value="NTPase/PRRC1"/>
</dbReference>
<dbReference type="InterPro" id="IPR050299">
    <property type="entry name" value="YjjX_NTPase"/>
</dbReference>
<dbReference type="NCBIfam" id="TIGR00258">
    <property type="entry name" value="inosine/xanthosine triphosphatase"/>
    <property type="match status" value="1"/>
</dbReference>
<dbReference type="NCBIfam" id="NF003459">
    <property type="entry name" value="PRK05074.1"/>
    <property type="match status" value="1"/>
</dbReference>
<dbReference type="PANTHER" id="PTHR34699">
    <property type="match status" value="1"/>
</dbReference>
<dbReference type="PANTHER" id="PTHR34699:SF2">
    <property type="entry name" value="NON-CANONICAL PURINE NTP PHOSPHATASE_PRRC1 DOMAIN-CONTAINING PROTEIN"/>
    <property type="match status" value="1"/>
</dbReference>
<dbReference type="Pfam" id="PF01931">
    <property type="entry name" value="NTPase_I-T"/>
    <property type="match status" value="1"/>
</dbReference>
<dbReference type="SUPFAM" id="SSF52972">
    <property type="entry name" value="ITPase-like"/>
    <property type="match status" value="1"/>
</dbReference>
<name>NCPP_YERPA</name>
<proteinExistence type="inferred from homology"/>